<keyword id="KW-1015">Disulfide bond</keyword>
<keyword id="KW-0325">Glycoprotein</keyword>
<keyword id="KW-0472">Membrane</keyword>
<keyword id="KW-0597">Phosphoprotein</keyword>
<keyword id="KW-1185">Reference proteome</keyword>
<keyword id="KW-0732">Signal</keyword>
<keyword id="KW-0812">Transmembrane</keyword>
<keyword id="KW-1133">Transmembrane helix</keyword>
<protein>
    <recommendedName>
        <fullName>Hematopoietic cell signal transducer</fullName>
    </recommendedName>
    <alternativeName>
        <fullName>DNAX-activation protein 10</fullName>
    </alternativeName>
    <alternativeName>
        <fullName>Membrane protein DAP10</fullName>
    </alternativeName>
</protein>
<accession>Q1XF11</accession>
<name>HCST_BOVIN</name>
<reference key="1">
    <citation type="journal article" date="2007" name="Immunogenetics">
        <title>Cloning, sequencing, and cell surface expression pattern of bovine immunoreceptor NKG2D and adaptor molecules DAP10 and DAP12.</title>
        <authorList>
            <person name="Fikri Y."/>
            <person name="Nyabenda J."/>
            <person name="Content J."/>
            <person name="Huygen K."/>
        </authorList>
    </citation>
    <scope>NUCLEOTIDE SEQUENCE [MRNA]</scope>
    <scope>INTERACTION WITH KLRK1</scope>
    <scope>SUBCELLULAR LOCATION</scope>
    <scope>SUBUNIT</scope>
    <scope>FUNCTION</scope>
    <source>
        <tissue>Peripheral blood</tissue>
    </source>
</reference>
<reference key="2">
    <citation type="submission" date="2007-06" db="EMBL/GenBank/DDBJ databases">
        <authorList>
            <consortium name="NIH - Mammalian Gene Collection (MGC) project"/>
        </authorList>
    </citation>
    <scope>NUCLEOTIDE SEQUENCE [LARGE SCALE MRNA]</scope>
    <source>
        <strain>Hereford</strain>
        <tissue>Ovary</tissue>
    </source>
</reference>
<proteinExistence type="evidence at protein level"/>
<feature type="signal peptide" evidence="3">
    <location>
        <begin position="1"/>
        <end position="18"/>
    </location>
</feature>
<feature type="chain" id="PRO_0000330286" description="Hematopoietic cell signal transducer">
    <location>
        <begin position="19"/>
        <end position="79"/>
    </location>
</feature>
<feature type="topological domain" description="Extracellular" evidence="3">
    <location>
        <begin position="19"/>
        <end position="35"/>
    </location>
</feature>
<feature type="transmembrane region" description="Helical" evidence="3">
    <location>
        <begin position="36"/>
        <end position="56"/>
    </location>
</feature>
<feature type="topological domain" description="Cytoplasmic" evidence="3">
    <location>
        <begin position="57"/>
        <end position="79"/>
    </location>
</feature>
<feature type="region of interest" description="PIK3R1 binding site">
    <location>
        <begin position="72"/>
        <end position="75"/>
    </location>
</feature>
<feature type="region of interest" description="GRB2 binding site" evidence="1">
    <location>
        <begin position="72"/>
        <end position="74"/>
    </location>
</feature>
<feature type="modified residue" description="Phosphotyrosine" evidence="2">
    <location>
        <position position="72"/>
    </location>
</feature>
<comment type="function">
    <text evidence="1 4">Transmembrane adapter protein which associates with KLRK1 to form an activation receptor KLRK1-HCST in lymphoid and myeloid cells; this receptor plays a major role in triggering cytotoxicity against target cells expressing cell surface ligands such as MHC class I chain-related MICA and MICB, and UL16-binding proteins (ULBPs); these ligands are up-regulated by stress conditions and pathological state such as viral infection and tumor transformation. Functions as a docking site for PI3-kinase PIK3R1 and GRB2. Interaction of ULBPs with KLRK1-HCST triggers calcium mobilization and activation of the PIK3R1, MAP2K/ERK, and JAK2/STAT5 signaling pathways. Both PIK3R1 and GRB2 are required for full KLRK1-HCST-mediated activation and ultimate killing of target cells. In NK cells, KLRK1-HCST signaling directly induces cytotoxicity and enhances cytokine production initiated via DAP12/TYROBP-associated receptors. In T-cells, it provides primarily costimulation for TCR-induced signals. KLRK1-HCST receptor plays a role in immune surveillance against tumors and is required for cytolysis of tumors cells; indeed, melanoma cells that do not express KLRK1 ligands escape from immune surveillance mediated by NK cells (By similarity).</text>
</comment>
<comment type="subunit">
    <text evidence="1 2 4">Homodimer; Disulfide-linked. Heterohexamer composed of four subunits of HCST/DAP10 and two subunits of KLRK1. Interacts (via transmembrane domain) with KLRK1 (via transmembrane domain); the interaction is required for KLRK1 NK cell surface and induces NK cell-mediated cytotoxicity. Interacts with PIK3R1 and GRB2. Interacts with CLEC5A. Forms an CLEC5A/TYROBP/HCST trimolecular complex depending almost solely on TYROBP (By similarity). Interacts with KLRK1. Interacts with CD300H (By similarity).</text>
</comment>
<comment type="subcellular location">
    <subcellularLocation>
        <location evidence="4">Membrane</location>
        <topology evidence="4">Single-pass type I membrane protein</topology>
    </subcellularLocation>
</comment>
<comment type="PTM">
    <text evidence="1">Phosphorylated; PIK3R1 and GRB2 associate specifically with tyrosine-phosphorylated HCST.</text>
</comment>
<comment type="PTM">
    <text evidence="1">O-glycosylated.</text>
</comment>
<comment type="similarity">
    <text evidence="5">Belongs to the DAP10 family.</text>
</comment>
<dbReference type="EMBL" id="AM075813">
    <property type="protein sequence ID" value="CAJ27508.1"/>
    <property type="molecule type" value="mRNA"/>
</dbReference>
<dbReference type="EMBL" id="BC142038">
    <property type="protein sequence ID" value="AAI42039.1"/>
    <property type="molecule type" value="mRNA"/>
</dbReference>
<dbReference type="RefSeq" id="NP_001070445.1">
    <property type="nucleotide sequence ID" value="NM_001076977.2"/>
</dbReference>
<dbReference type="RefSeq" id="XP_059732978.1">
    <property type="nucleotide sequence ID" value="XM_059876995.1"/>
</dbReference>
<dbReference type="SMR" id="Q1XF11"/>
<dbReference type="FunCoup" id="Q1XF11">
    <property type="interactions" value="305"/>
</dbReference>
<dbReference type="STRING" id="9913.ENSBTAP00000074418"/>
<dbReference type="PaxDb" id="9913-ENSBTAP00000009651"/>
<dbReference type="GeneID" id="767892"/>
<dbReference type="KEGG" id="bta:767892"/>
<dbReference type="CTD" id="10870"/>
<dbReference type="VEuPathDB" id="HostDB:ENSBTAG00000007336"/>
<dbReference type="eggNOG" id="ENOG502TKP3">
    <property type="taxonomic scope" value="Eukaryota"/>
</dbReference>
<dbReference type="HOGENOM" id="CLU_196934_0_0_1"/>
<dbReference type="InParanoid" id="Q1XF11"/>
<dbReference type="OMA" id="AQMTPGE"/>
<dbReference type="OrthoDB" id="8670797at2759"/>
<dbReference type="TreeFam" id="TF338335"/>
<dbReference type="Reactome" id="R-BTA-198933">
    <property type="pathway name" value="Immunoregulatory interactions between a Lymphoid and a non-Lymphoid cell"/>
</dbReference>
<dbReference type="Proteomes" id="UP000009136">
    <property type="component" value="Chromosome 18"/>
</dbReference>
<dbReference type="Bgee" id="ENSBTAG00000007336">
    <property type="expression patterns" value="Expressed in blood and 85 other cell types or tissues"/>
</dbReference>
<dbReference type="GO" id="GO:0009986">
    <property type="term" value="C:cell surface"/>
    <property type="evidence" value="ECO:0000250"/>
    <property type="project" value="UniProtKB"/>
</dbReference>
<dbReference type="GO" id="GO:0016020">
    <property type="term" value="C:membrane"/>
    <property type="evidence" value="ECO:0007669"/>
    <property type="project" value="UniProtKB-SubCell"/>
</dbReference>
<dbReference type="GO" id="GO:0043548">
    <property type="term" value="F:phosphatidylinositol 3-kinase binding"/>
    <property type="evidence" value="ECO:0000318"/>
    <property type="project" value="GO_Central"/>
</dbReference>
<dbReference type="GO" id="GO:0005102">
    <property type="term" value="F:signaling receptor binding"/>
    <property type="evidence" value="ECO:0000318"/>
    <property type="project" value="GO_Central"/>
</dbReference>
<dbReference type="GO" id="GO:0051897">
    <property type="term" value="P:positive regulation of phosphatidylinositol 3-kinase/protein kinase B signal transduction"/>
    <property type="evidence" value="ECO:0000318"/>
    <property type="project" value="GO_Central"/>
</dbReference>
<dbReference type="GO" id="GO:0050776">
    <property type="term" value="P:regulation of immune response"/>
    <property type="evidence" value="ECO:0007669"/>
    <property type="project" value="InterPro"/>
</dbReference>
<dbReference type="InterPro" id="IPR009861">
    <property type="entry name" value="HCST"/>
</dbReference>
<dbReference type="PANTHER" id="PTHR21409">
    <property type="entry name" value="HEMATOPOIETIC CELL SIGNAL TRANSDUCER"/>
    <property type="match status" value="1"/>
</dbReference>
<dbReference type="PANTHER" id="PTHR21409:SF1">
    <property type="entry name" value="HEMATOPOIETIC CELL SIGNAL TRANSDUCER"/>
    <property type="match status" value="1"/>
</dbReference>
<dbReference type="Pfam" id="PF07213">
    <property type="entry name" value="DAP10"/>
    <property type="match status" value="1"/>
</dbReference>
<sequence>MVPPGNILFLLLLPVATAQMTPGSCSGCGPLSLPLLAGLVAADAVVSLLIVVVVFVCARLRSRPTQEDDKIYINMPGRG</sequence>
<evidence type="ECO:0000250" key="1"/>
<evidence type="ECO:0000250" key="2">
    <source>
        <dbReference type="UniProtKB" id="Q9UBK5"/>
    </source>
</evidence>
<evidence type="ECO:0000255" key="3"/>
<evidence type="ECO:0000269" key="4">
    <source>
    </source>
</evidence>
<evidence type="ECO:0000305" key="5"/>
<gene>
    <name type="primary">HCST</name>
    <name type="synonym">DAP10</name>
</gene>
<organism>
    <name type="scientific">Bos taurus</name>
    <name type="common">Bovine</name>
    <dbReference type="NCBI Taxonomy" id="9913"/>
    <lineage>
        <taxon>Eukaryota</taxon>
        <taxon>Metazoa</taxon>
        <taxon>Chordata</taxon>
        <taxon>Craniata</taxon>
        <taxon>Vertebrata</taxon>
        <taxon>Euteleostomi</taxon>
        <taxon>Mammalia</taxon>
        <taxon>Eutheria</taxon>
        <taxon>Laurasiatheria</taxon>
        <taxon>Artiodactyla</taxon>
        <taxon>Ruminantia</taxon>
        <taxon>Pecora</taxon>
        <taxon>Bovidae</taxon>
        <taxon>Bovinae</taxon>
        <taxon>Bos</taxon>
    </lineage>
</organism>